<proteinExistence type="inferred from homology"/>
<evidence type="ECO:0000255" key="1">
    <source>
        <dbReference type="HAMAP-Rule" id="MF_00377"/>
    </source>
</evidence>
<dbReference type="EMBL" id="CP000554">
    <property type="protein sequence ID" value="ABM77581.1"/>
    <property type="molecule type" value="Genomic_DNA"/>
</dbReference>
<dbReference type="RefSeq" id="WP_011825492.1">
    <property type="nucleotide sequence ID" value="NC_008820.1"/>
</dbReference>
<dbReference type="SMR" id="A2C7X1"/>
<dbReference type="STRING" id="59922.P9303_08301"/>
<dbReference type="KEGG" id="pmf:P9303_08301"/>
<dbReference type="HOGENOM" id="CLU_026910_3_1_3"/>
<dbReference type="BioCyc" id="PMAR59922:G1G80-749-MONOMER"/>
<dbReference type="Proteomes" id="UP000002274">
    <property type="component" value="Chromosome"/>
</dbReference>
<dbReference type="GO" id="GO:0005737">
    <property type="term" value="C:cytoplasm"/>
    <property type="evidence" value="ECO:0007669"/>
    <property type="project" value="UniProtKB-SubCell"/>
</dbReference>
<dbReference type="GO" id="GO:0005886">
    <property type="term" value="C:plasma membrane"/>
    <property type="evidence" value="ECO:0007669"/>
    <property type="project" value="TreeGrafter"/>
</dbReference>
<dbReference type="GO" id="GO:0005524">
    <property type="term" value="F:ATP binding"/>
    <property type="evidence" value="ECO:0007669"/>
    <property type="project" value="UniProtKB-UniRule"/>
</dbReference>
<dbReference type="GO" id="GO:0016887">
    <property type="term" value="F:ATP hydrolysis activity"/>
    <property type="evidence" value="ECO:0007669"/>
    <property type="project" value="InterPro"/>
</dbReference>
<dbReference type="GO" id="GO:0003688">
    <property type="term" value="F:DNA replication origin binding"/>
    <property type="evidence" value="ECO:0007669"/>
    <property type="project" value="UniProtKB-UniRule"/>
</dbReference>
<dbReference type="GO" id="GO:0008289">
    <property type="term" value="F:lipid binding"/>
    <property type="evidence" value="ECO:0007669"/>
    <property type="project" value="UniProtKB-KW"/>
</dbReference>
<dbReference type="GO" id="GO:0006270">
    <property type="term" value="P:DNA replication initiation"/>
    <property type="evidence" value="ECO:0007669"/>
    <property type="project" value="UniProtKB-UniRule"/>
</dbReference>
<dbReference type="GO" id="GO:0006275">
    <property type="term" value="P:regulation of DNA replication"/>
    <property type="evidence" value="ECO:0007669"/>
    <property type="project" value="UniProtKB-UniRule"/>
</dbReference>
<dbReference type="CDD" id="cd00009">
    <property type="entry name" value="AAA"/>
    <property type="match status" value="1"/>
</dbReference>
<dbReference type="CDD" id="cd06571">
    <property type="entry name" value="Bac_DnaA_C"/>
    <property type="match status" value="1"/>
</dbReference>
<dbReference type="FunFam" id="3.40.50.300:FF:000668">
    <property type="entry name" value="Chromosomal replication initiator protein DnaA"/>
    <property type="match status" value="1"/>
</dbReference>
<dbReference type="Gene3D" id="1.10.1750.10">
    <property type="match status" value="1"/>
</dbReference>
<dbReference type="Gene3D" id="1.10.8.60">
    <property type="match status" value="1"/>
</dbReference>
<dbReference type="Gene3D" id="3.30.300.180">
    <property type="match status" value="1"/>
</dbReference>
<dbReference type="Gene3D" id="3.40.50.300">
    <property type="entry name" value="P-loop containing nucleotide triphosphate hydrolases"/>
    <property type="match status" value="1"/>
</dbReference>
<dbReference type="HAMAP" id="MF_00377">
    <property type="entry name" value="DnaA_bact"/>
    <property type="match status" value="1"/>
</dbReference>
<dbReference type="InterPro" id="IPR003593">
    <property type="entry name" value="AAA+_ATPase"/>
</dbReference>
<dbReference type="InterPro" id="IPR001957">
    <property type="entry name" value="Chromosome_initiator_DnaA"/>
</dbReference>
<dbReference type="InterPro" id="IPR020591">
    <property type="entry name" value="Chromosome_initiator_DnaA-like"/>
</dbReference>
<dbReference type="InterPro" id="IPR018312">
    <property type="entry name" value="Chromosome_initiator_DnaA_CS"/>
</dbReference>
<dbReference type="InterPro" id="IPR013159">
    <property type="entry name" value="DnaA_C"/>
</dbReference>
<dbReference type="InterPro" id="IPR013317">
    <property type="entry name" value="DnaA_dom"/>
</dbReference>
<dbReference type="InterPro" id="IPR024633">
    <property type="entry name" value="DnaA_N_dom"/>
</dbReference>
<dbReference type="InterPro" id="IPR038454">
    <property type="entry name" value="DnaA_N_sf"/>
</dbReference>
<dbReference type="InterPro" id="IPR027417">
    <property type="entry name" value="P-loop_NTPase"/>
</dbReference>
<dbReference type="InterPro" id="IPR010921">
    <property type="entry name" value="Trp_repressor/repl_initiator"/>
</dbReference>
<dbReference type="NCBIfam" id="TIGR00362">
    <property type="entry name" value="DnaA"/>
    <property type="match status" value="1"/>
</dbReference>
<dbReference type="PANTHER" id="PTHR30050">
    <property type="entry name" value="CHROMOSOMAL REPLICATION INITIATOR PROTEIN DNAA"/>
    <property type="match status" value="1"/>
</dbReference>
<dbReference type="PANTHER" id="PTHR30050:SF2">
    <property type="entry name" value="CHROMOSOMAL REPLICATION INITIATOR PROTEIN DNAA"/>
    <property type="match status" value="1"/>
</dbReference>
<dbReference type="Pfam" id="PF00308">
    <property type="entry name" value="Bac_DnaA"/>
    <property type="match status" value="1"/>
</dbReference>
<dbReference type="Pfam" id="PF08299">
    <property type="entry name" value="Bac_DnaA_C"/>
    <property type="match status" value="1"/>
</dbReference>
<dbReference type="Pfam" id="PF11638">
    <property type="entry name" value="DnaA_N"/>
    <property type="match status" value="1"/>
</dbReference>
<dbReference type="PRINTS" id="PR00051">
    <property type="entry name" value="DNAA"/>
</dbReference>
<dbReference type="SMART" id="SM00382">
    <property type="entry name" value="AAA"/>
    <property type="match status" value="1"/>
</dbReference>
<dbReference type="SMART" id="SM00760">
    <property type="entry name" value="Bac_DnaA_C"/>
    <property type="match status" value="1"/>
</dbReference>
<dbReference type="SUPFAM" id="SSF52540">
    <property type="entry name" value="P-loop containing nucleoside triphosphate hydrolases"/>
    <property type="match status" value="1"/>
</dbReference>
<dbReference type="SUPFAM" id="SSF48295">
    <property type="entry name" value="TrpR-like"/>
    <property type="match status" value="1"/>
</dbReference>
<dbReference type="PROSITE" id="PS01008">
    <property type="entry name" value="DNAA"/>
    <property type="match status" value="1"/>
</dbReference>
<comment type="function">
    <text evidence="1">Plays an essential role in the initiation and regulation of chromosomal replication. ATP-DnaA binds to the origin of replication (oriC) to initiate formation of the DNA replication initiation complex once per cell cycle. Binds the DnaA box (a 9 base pair repeat at the origin) and separates the double-stranded (ds)DNA. Forms a right-handed helical filament on oriC DNA; dsDNA binds to the exterior of the filament while single-stranded (ss)DNA is stabiized in the filament's interior. The ATP-DnaA-oriC complex binds and stabilizes one strand of the AT-rich DNA unwinding element (DUE), permitting loading of DNA polymerase. After initiation quickly degrades to an ADP-DnaA complex that is not apt for DNA replication. Binds acidic phospholipids.</text>
</comment>
<comment type="subunit">
    <text evidence="1">Oligomerizes as a right-handed, spiral filament on DNA at oriC.</text>
</comment>
<comment type="subcellular location">
    <subcellularLocation>
        <location evidence="1">Cytoplasm</location>
    </subcellularLocation>
</comment>
<comment type="domain">
    <text evidence="1">Domain I is involved in oligomerization and binding regulators, domain II is flexibile and of varying length in different bacteria, domain III forms the AAA+ region, while domain IV binds dsDNA.</text>
</comment>
<comment type="similarity">
    <text evidence="1">Belongs to the DnaA family.</text>
</comment>
<keyword id="KW-0067">ATP-binding</keyword>
<keyword id="KW-0963">Cytoplasm</keyword>
<keyword id="KW-0235">DNA replication</keyword>
<keyword id="KW-0238">DNA-binding</keyword>
<keyword id="KW-0446">Lipid-binding</keyword>
<keyword id="KW-0547">Nucleotide-binding</keyword>
<feature type="chain" id="PRO_1000048687" description="Chromosomal replication initiator protein DnaA">
    <location>
        <begin position="1"/>
        <end position="463"/>
    </location>
</feature>
<feature type="region of interest" description="Domain I, interacts with DnaA modulators" evidence="1">
    <location>
        <begin position="1"/>
        <end position="78"/>
    </location>
</feature>
<feature type="region of interest" description="Domain II" evidence="1">
    <location>
        <begin position="78"/>
        <end position="122"/>
    </location>
</feature>
<feature type="region of interest" description="Domain III, AAA+ region" evidence="1">
    <location>
        <begin position="123"/>
        <end position="339"/>
    </location>
</feature>
<feature type="region of interest" description="Domain IV, binds dsDNA" evidence="1">
    <location>
        <begin position="340"/>
        <end position="463"/>
    </location>
</feature>
<feature type="binding site" evidence="1">
    <location>
        <position position="167"/>
    </location>
    <ligand>
        <name>ATP</name>
        <dbReference type="ChEBI" id="CHEBI:30616"/>
    </ligand>
</feature>
<feature type="binding site" evidence="1">
    <location>
        <position position="169"/>
    </location>
    <ligand>
        <name>ATP</name>
        <dbReference type="ChEBI" id="CHEBI:30616"/>
    </ligand>
</feature>
<feature type="binding site" evidence="1">
    <location>
        <position position="170"/>
    </location>
    <ligand>
        <name>ATP</name>
        <dbReference type="ChEBI" id="CHEBI:30616"/>
    </ligand>
</feature>
<feature type="binding site" evidence="1">
    <location>
        <position position="171"/>
    </location>
    <ligand>
        <name>ATP</name>
        <dbReference type="ChEBI" id="CHEBI:30616"/>
    </ligand>
</feature>
<reference key="1">
    <citation type="journal article" date="2007" name="PLoS Genet.">
        <title>Patterns and implications of gene gain and loss in the evolution of Prochlorococcus.</title>
        <authorList>
            <person name="Kettler G.C."/>
            <person name="Martiny A.C."/>
            <person name="Huang K."/>
            <person name="Zucker J."/>
            <person name="Coleman M.L."/>
            <person name="Rodrigue S."/>
            <person name="Chen F."/>
            <person name="Lapidus A."/>
            <person name="Ferriera S."/>
            <person name="Johnson J."/>
            <person name="Steglich C."/>
            <person name="Church G.M."/>
            <person name="Richardson P."/>
            <person name="Chisholm S.W."/>
        </authorList>
    </citation>
    <scope>NUCLEOTIDE SEQUENCE [LARGE SCALE GENOMIC DNA]</scope>
    <source>
        <strain>MIT 9303</strain>
    </source>
</reference>
<organism>
    <name type="scientific">Prochlorococcus marinus (strain MIT 9303)</name>
    <dbReference type="NCBI Taxonomy" id="59922"/>
    <lineage>
        <taxon>Bacteria</taxon>
        <taxon>Bacillati</taxon>
        <taxon>Cyanobacteriota</taxon>
        <taxon>Cyanophyceae</taxon>
        <taxon>Synechococcales</taxon>
        <taxon>Prochlorococcaceae</taxon>
        <taxon>Prochlorococcus</taxon>
    </lineage>
</organism>
<gene>
    <name evidence="1" type="primary">dnaA</name>
    <name type="ordered locus">P9303_08301</name>
</gene>
<accession>A2C7X1</accession>
<name>DNAA_PROM3</name>
<sequence>MVLTGNELWSKVQQALQHNLSKPTFETWIRPAICSGFRDGELTLIAPNSFASNWLRKNYVQTIEAAAAKIYGQPVRVSVQAQEEDSAERVLPPMASAPVPLPAAEATTASAAPSSGPRRILPGLNLRYVFNRFVVGPNSRMAHAAALAVAEAPGREFNPLFICGGVGLGKTHLMQAIGHYRLEINPEAKVAYVSTETFTNDLIQAIRKDGMQAFRDRYRATDLILVDDIQFIEGKEYTQEEFFHTFNALHEAGRQIVIASDRPPSQIPKLQERLISRFSMGLIADIQSPDLETRMAILQKKAEQERMMLPRDLIQYIAGRFTSNIRELEGALTRAVAFASITGLPMTVESVAPMLDPNGQGVDVTPQQVIDKVSEVFDVTPQDMRSSSRRRAVSHARQVGMYLMRQGTDLSLPRIGETFGGKDHTTVMYAIEQVEKRLSSDPQLASQVRRVRDLLQIDSRRRR</sequence>
<protein>
    <recommendedName>
        <fullName evidence="1">Chromosomal replication initiator protein DnaA</fullName>
    </recommendedName>
</protein>